<reference key="1">
    <citation type="journal article" date="2004" name="Nucleic Acids Res.">
        <title>Comparative analysis of the Borrelia garinii genome.</title>
        <authorList>
            <person name="Gloeckner G."/>
            <person name="Lehmann R."/>
            <person name="Romualdi A."/>
            <person name="Pradella S."/>
            <person name="Schulte-Spechtel U."/>
            <person name="Schilhabel M."/>
            <person name="Wilske B."/>
            <person name="Suehnel J."/>
            <person name="Platzer M."/>
        </authorList>
    </citation>
    <scope>NUCLEOTIDE SEQUENCE [LARGE SCALE GENOMIC DNA]</scope>
    <source>
        <strain>ATCC BAA-2496 / DSM 23469 / PBi</strain>
    </source>
</reference>
<proteinExistence type="inferred from homology"/>
<organism>
    <name type="scientific">Borrelia garinii subsp. bavariensis (strain ATCC BAA-2496 / DSM 23469 / PBi)</name>
    <name type="common">Borreliella bavariensis</name>
    <dbReference type="NCBI Taxonomy" id="290434"/>
    <lineage>
        <taxon>Bacteria</taxon>
        <taxon>Pseudomonadati</taxon>
        <taxon>Spirochaetota</taxon>
        <taxon>Spirochaetia</taxon>
        <taxon>Spirochaetales</taxon>
        <taxon>Borreliaceae</taxon>
        <taxon>Borreliella</taxon>
    </lineage>
</organism>
<name>RL23_BORGP</name>
<comment type="function">
    <text evidence="1">One of the early assembly proteins it binds 23S rRNA. One of the proteins that surrounds the polypeptide exit tunnel on the outside of the ribosome. Forms the main docking site for trigger factor binding to the ribosome.</text>
</comment>
<comment type="subunit">
    <text evidence="1">Part of the 50S ribosomal subunit. Contacts protein L29, and trigger factor when it is bound to the ribosome.</text>
</comment>
<comment type="similarity">
    <text evidence="1">Belongs to the universal ribosomal protein uL23 family.</text>
</comment>
<keyword id="KW-0687">Ribonucleoprotein</keyword>
<keyword id="KW-0689">Ribosomal protein</keyword>
<keyword id="KW-0694">RNA-binding</keyword>
<keyword id="KW-0699">rRNA-binding</keyword>
<dbReference type="EMBL" id="CP000013">
    <property type="protein sequence ID" value="AAU07331.1"/>
    <property type="molecule type" value="Genomic_DNA"/>
</dbReference>
<dbReference type="RefSeq" id="WP_011193800.1">
    <property type="nucleotide sequence ID" value="NZ_CP028872.1"/>
</dbReference>
<dbReference type="SMR" id="Q661E0"/>
<dbReference type="GeneID" id="83865955"/>
<dbReference type="KEGG" id="bga:BG0492"/>
<dbReference type="eggNOG" id="COG0089">
    <property type="taxonomic scope" value="Bacteria"/>
</dbReference>
<dbReference type="HOGENOM" id="CLU_037562_3_1_12"/>
<dbReference type="OrthoDB" id="9793353at2"/>
<dbReference type="Proteomes" id="UP000002276">
    <property type="component" value="Chromosome"/>
</dbReference>
<dbReference type="GO" id="GO:1990904">
    <property type="term" value="C:ribonucleoprotein complex"/>
    <property type="evidence" value="ECO:0007669"/>
    <property type="project" value="UniProtKB-KW"/>
</dbReference>
<dbReference type="GO" id="GO:0005840">
    <property type="term" value="C:ribosome"/>
    <property type="evidence" value="ECO:0007669"/>
    <property type="project" value="UniProtKB-KW"/>
</dbReference>
<dbReference type="GO" id="GO:0019843">
    <property type="term" value="F:rRNA binding"/>
    <property type="evidence" value="ECO:0007669"/>
    <property type="project" value="UniProtKB-UniRule"/>
</dbReference>
<dbReference type="GO" id="GO:0003735">
    <property type="term" value="F:structural constituent of ribosome"/>
    <property type="evidence" value="ECO:0007669"/>
    <property type="project" value="InterPro"/>
</dbReference>
<dbReference type="GO" id="GO:0006412">
    <property type="term" value="P:translation"/>
    <property type="evidence" value="ECO:0007669"/>
    <property type="project" value="UniProtKB-UniRule"/>
</dbReference>
<dbReference type="Gene3D" id="3.30.70.330">
    <property type="match status" value="1"/>
</dbReference>
<dbReference type="HAMAP" id="MF_01369_B">
    <property type="entry name" value="Ribosomal_uL23_B"/>
    <property type="match status" value="1"/>
</dbReference>
<dbReference type="InterPro" id="IPR012677">
    <property type="entry name" value="Nucleotide-bd_a/b_plait_sf"/>
</dbReference>
<dbReference type="InterPro" id="IPR013025">
    <property type="entry name" value="Ribosomal_uL23-like"/>
</dbReference>
<dbReference type="InterPro" id="IPR012678">
    <property type="entry name" value="Ribosomal_uL23/eL15/eS24_sf"/>
</dbReference>
<dbReference type="NCBIfam" id="NF004363">
    <property type="entry name" value="PRK05738.2-4"/>
    <property type="match status" value="1"/>
</dbReference>
<dbReference type="PANTHER" id="PTHR11620">
    <property type="entry name" value="60S RIBOSOMAL PROTEIN L23A"/>
    <property type="match status" value="1"/>
</dbReference>
<dbReference type="Pfam" id="PF00276">
    <property type="entry name" value="Ribosomal_L23"/>
    <property type="match status" value="1"/>
</dbReference>
<dbReference type="SUPFAM" id="SSF54189">
    <property type="entry name" value="Ribosomal proteins S24e, L23 and L15e"/>
    <property type="match status" value="1"/>
</dbReference>
<accession>Q661E0</accession>
<sequence length="98" mass="11171">MKAYDIIVSPMLTEKTNTQRESINVYVFKVNKRANKKEVGAAIKELFNVTPVSCNLLNIKSKAKVVVSRRGYPIGKGKTSSWKKAYVYLKKEDKIDIF</sequence>
<evidence type="ECO:0000255" key="1">
    <source>
        <dbReference type="HAMAP-Rule" id="MF_01369"/>
    </source>
</evidence>
<evidence type="ECO:0000305" key="2"/>
<protein>
    <recommendedName>
        <fullName evidence="1">Large ribosomal subunit protein uL23</fullName>
    </recommendedName>
    <alternativeName>
        <fullName evidence="2">50S ribosomal protein L23</fullName>
    </alternativeName>
</protein>
<feature type="chain" id="PRO_1000068043" description="Large ribosomal subunit protein uL23">
    <location>
        <begin position="1"/>
        <end position="98"/>
    </location>
</feature>
<gene>
    <name evidence="1" type="primary">rplW</name>
    <name type="ordered locus">BG0492</name>
</gene>